<reference key="1">
    <citation type="journal article" date="2005" name="Nat. Genet.">
        <title>The complete genome sequence of Francisella tularensis, the causative agent of tularemia.</title>
        <authorList>
            <person name="Larsson P."/>
            <person name="Oyston P.C.F."/>
            <person name="Chain P."/>
            <person name="Chu M.C."/>
            <person name="Duffield M."/>
            <person name="Fuxelius H.-H."/>
            <person name="Garcia E."/>
            <person name="Haelltorp G."/>
            <person name="Johansson D."/>
            <person name="Isherwood K.E."/>
            <person name="Karp P.D."/>
            <person name="Larsson E."/>
            <person name="Liu Y."/>
            <person name="Michell S."/>
            <person name="Prior J."/>
            <person name="Prior R."/>
            <person name="Malfatti S."/>
            <person name="Sjoestedt A."/>
            <person name="Svensson K."/>
            <person name="Thompson N."/>
            <person name="Vergez L."/>
            <person name="Wagg J.K."/>
            <person name="Wren B.W."/>
            <person name="Lindler L.E."/>
            <person name="Andersson S.G.E."/>
            <person name="Forsman M."/>
            <person name="Titball R.W."/>
        </authorList>
    </citation>
    <scope>NUCLEOTIDE SEQUENCE [LARGE SCALE GENOMIC DNA]</scope>
    <source>
        <strain>SCHU S4 / Schu 4</strain>
    </source>
</reference>
<dbReference type="EC" id="7.1.1.-" evidence="1"/>
<dbReference type="EMBL" id="AJ749949">
    <property type="protein sequence ID" value="CAG44672.1"/>
    <property type="molecule type" value="Genomic_DNA"/>
</dbReference>
<dbReference type="RefSeq" id="WP_003017376.1">
    <property type="nucleotide sequence ID" value="NZ_CP010290.1"/>
</dbReference>
<dbReference type="RefSeq" id="YP_169115.1">
    <property type="nucleotide sequence ID" value="NC_006570.2"/>
</dbReference>
<dbReference type="SMR" id="Q5NIM7"/>
<dbReference type="STRING" id="177416.FTT_0039"/>
<dbReference type="DNASU" id="3191832"/>
<dbReference type="EnsemblBacteria" id="CAG44672">
    <property type="protein sequence ID" value="CAG44672"/>
    <property type="gene ID" value="FTT_0039"/>
</dbReference>
<dbReference type="KEGG" id="ftu:FTT_0039"/>
<dbReference type="eggNOG" id="COG1143">
    <property type="taxonomic scope" value="Bacteria"/>
</dbReference>
<dbReference type="OrthoDB" id="9808559at2"/>
<dbReference type="Proteomes" id="UP000001174">
    <property type="component" value="Chromosome"/>
</dbReference>
<dbReference type="GO" id="GO:0005886">
    <property type="term" value="C:plasma membrane"/>
    <property type="evidence" value="ECO:0007669"/>
    <property type="project" value="UniProtKB-SubCell"/>
</dbReference>
<dbReference type="GO" id="GO:0051539">
    <property type="term" value="F:4 iron, 4 sulfur cluster binding"/>
    <property type="evidence" value="ECO:0007669"/>
    <property type="project" value="UniProtKB-KW"/>
</dbReference>
<dbReference type="GO" id="GO:0005506">
    <property type="term" value="F:iron ion binding"/>
    <property type="evidence" value="ECO:0007669"/>
    <property type="project" value="UniProtKB-UniRule"/>
</dbReference>
<dbReference type="GO" id="GO:0050136">
    <property type="term" value="F:NADH:ubiquinone reductase (non-electrogenic) activity"/>
    <property type="evidence" value="ECO:0007669"/>
    <property type="project" value="UniProtKB-UniRule"/>
</dbReference>
<dbReference type="GO" id="GO:0048038">
    <property type="term" value="F:quinone binding"/>
    <property type="evidence" value="ECO:0007669"/>
    <property type="project" value="UniProtKB-KW"/>
</dbReference>
<dbReference type="GO" id="GO:0009060">
    <property type="term" value="P:aerobic respiration"/>
    <property type="evidence" value="ECO:0007669"/>
    <property type="project" value="TreeGrafter"/>
</dbReference>
<dbReference type="FunFam" id="3.30.70.3270:FF:000003">
    <property type="entry name" value="NADH-quinone oxidoreductase subunit I"/>
    <property type="match status" value="1"/>
</dbReference>
<dbReference type="Gene3D" id="3.30.70.3270">
    <property type="match status" value="1"/>
</dbReference>
<dbReference type="HAMAP" id="MF_01351">
    <property type="entry name" value="NDH1_NuoI"/>
    <property type="match status" value="1"/>
</dbReference>
<dbReference type="InterPro" id="IPR017896">
    <property type="entry name" value="4Fe4S_Fe-S-bd"/>
</dbReference>
<dbReference type="InterPro" id="IPR017900">
    <property type="entry name" value="4Fe4S_Fe_S_CS"/>
</dbReference>
<dbReference type="InterPro" id="IPR010226">
    <property type="entry name" value="NADH_quinone_OxRdtase_chainI"/>
</dbReference>
<dbReference type="NCBIfam" id="TIGR01971">
    <property type="entry name" value="NuoI"/>
    <property type="match status" value="1"/>
</dbReference>
<dbReference type="NCBIfam" id="NF004538">
    <property type="entry name" value="PRK05888.1-4"/>
    <property type="match status" value="1"/>
</dbReference>
<dbReference type="PANTHER" id="PTHR10849:SF20">
    <property type="entry name" value="NADH DEHYDROGENASE [UBIQUINONE] IRON-SULFUR PROTEIN 8, MITOCHONDRIAL"/>
    <property type="match status" value="1"/>
</dbReference>
<dbReference type="PANTHER" id="PTHR10849">
    <property type="entry name" value="NADH DEHYDROGENASE UBIQUINONE IRON-SULFUR PROTEIN 8, MITOCHONDRIAL"/>
    <property type="match status" value="1"/>
</dbReference>
<dbReference type="Pfam" id="PF12838">
    <property type="entry name" value="Fer4_7"/>
    <property type="match status" value="1"/>
</dbReference>
<dbReference type="SUPFAM" id="SSF54862">
    <property type="entry name" value="4Fe-4S ferredoxins"/>
    <property type="match status" value="1"/>
</dbReference>
<dbReference type="PROSITE" id="PS00198">
    <property type="entry name" value="4FE4S_FER_1"/>
    <property type="match status" value="2"/>
</dbReference>
<dbReference type="PROSITE" id="PS51379">
    <property type="entry name" value="4FE4S_FER_2"/>
    <property type="match status" value="2"/>
</dbReference>
<comment type="function">
    <text evidence="1">NDH-1 shuttles electrons from NADH, via FMN and iron-sulfur (Fe-S) centers, to quinones in the respiratory chain. The immediate electron acceptor for the enzyme in this species is believed to be ubiquinone. Couples the redox reaction to proton translocation (for every two electrons transferred, four hydrogen ions are translocated across the cytoplasmic membrane), and thus conserves the redox energy in a proton gradient.</text>
</comment>
<comment type="catalytic activity">
    <reaction evidence="1">
        <text>a quinone + NADH + 5 H(+)(in) = a quinol + NAD(+) + 4 H(+)(out)</text>
        <dbReference type="Rhea" id="RHEA:57888"/>
        <dbReference type="ChEBI" id="CHEBI:15378"/>
        <dbReference type="ChEBI" id="CHEBI:24646"/>
        <dbReference type="ChEBI" id="CHEBI:57540"/>
        <dbReference type="ChEBI" id="CHEBI:57945"/>
        <dbReference type="ChEBI" id="CHEBI:132124"/>
    </reaction>
</comment>
<comment type="cofactor">
    <cofactor evidence="1">
        <name>[4Fe-4S] cluster</name>
        <dbReference type="ChEBI" id="CHEBI:49883"/>
    </cofactor>
    <text evidence="1">Binds 2 [4Fe-4S] clusters per subunit.</text>
</comment>
<comment type="subunit">
    <text evidence="1">NDH-1 is composed of 14 different subunits. Subunits NuoA, H, J, K, L, M, N constitute the membrane sector of the complex.</text>
</comment>
<comment type="subcellular location">
    <subcellularLocation>
        <location evidence="1">Cell inner membrane</location>
        <topology evidence="1">Peripheral membrane protein</topology>
    </subcellularLocation>
</comment>
<comment type="similarity">
    <text evidence="1">Belongs to the complex I 23 kDa subunit family.</text>
</comment>
<keyword id="KW-0004">4Fe-4S</keyword>
<keyword id="KW-0997">Cell inner membrane</keyword>
<keyword id="KW-1003">Cell membrane</keyword>
<keyword id="KW-0408">Iron</keyword>
<keyword id="KW-0411">Iron-sulfur</keyword>
<keyword id="KW-0472">Membrane</keyword>
<keyword id="KW-0479">Metal-binding</keyword>
<keyword id="KW-0520">NAD</keyword>
<keyword id="KW-0874">Quinone</keyword>
<keyword id="KW-1185">Reference proteome</keyword>
<keyword id="KW-0677">Repeat</keyword>
<keyword id="KW-1278">Translocase</keyword>
<keyword id="KW-0830">Ubiquinone</keyword>
<accession>Q5NIM7</accession>
<protein>
    <recommendedName>
        <fullName evidence="1">NADH-quinone oxidoreductase subunit I</fullName>
        <ecNumber evidence="1">7.1.1.-</ecNumber>
    </recommendedName>
    <alternativeName>
        <fullName evidence="1">NADH dehydrogenase I subunit I</fullName>
    </alternativeName>
    <alternativeName>
        <fullName evidence="1">NDH-1 subunit I</fullName>
    </alternativeName>
</protein>
<feature type="chain" id="PRO_0000250908" description="NADH-quinone oxidoreductase subunit I">
    <location>
        <begin position="1"/>
        <end position="162"/>
    </location>
</feature>
<feature type="domain" description="4Fe-4S ferredoxin-type 1" evidence="1">
    <location>
        <begin position="54"/>
        <end position="83"/>
    </location>
</feature>
<feature type="domain" description="4Fe-4S ferredoxin-type 2" evidence="1">
    <location>
        <begin position="93"/>
        <end position="122"/>
    </location>
</feature>
<feature type="binding site" evidence="1">
    <location>
        <position position="63"/>
    </location>
    <ligand>
        <name>[4Fe-4S] cluster</name>
        <dbReference type="ChEBI" id="CHEBI:49883"/>
        <label>1</label>
    </ligand>
</feature>
<feature type="binding site" evidence="1">
    <location>
        <position position="66"/>
    </location>
    <ligand>
        <name>[4Fe-4S] cluster</name>
        <dbReference type="ChEBI" id="CHEBI:49883"/>
        <label>1</label>
    </ligand>
</feature>
<feature type="binding site" evidence="1">
    <location>
        <position position="69"/>
    </location>
    <ligand>
        <name>[4Fe-4S] cluster</name>
        <dbReference type="ChEBI" id="CHEBI:49883"/>
        <label>1</label>
    </ligand>
</feature>
<feature type="binding site" evidence="1">
    <location>
        <position position="73"/>
    </location>
    <ligand>
        <name>[4Fe-4S] cluster</name>
        <dbReference type="ChEBI" id="CHEBI:49883"/>
        <label>2</label>
    </ligand>
</feature>
<feature type="binding site" evidence="1">
    <location>
        <position position="102"/>
    </location>
    <ligand>
        <name>[4Fe-4S] cluster</name>
        <dbReference type="ChEBI" id="CHEBI:49883"/>
        <label>2</label>
    </ligand>
</feature>
<feature type="binding site" evidence="1">
    <location>
        <position position="105"/>
    </location>
    <ligand>
        <name>[4Fe-4S] cluster</name>
        <dbReference type="ChEBI" id="CHEBI:49883"/>
        <label>2</label>
    </ligand>
</feature>
<feature type="binding site" evidence="1">
    <location>
        <position position="108"/>
    </location>
    <ligand>
        <name>[4Fe-4S] cluster</name>
        <dbReference type="ChEBI" id="CHEBI:49883"/>
        <label>2</label>
    </ligand>
</feature>
<feature type="binding site" evidence="1">
    <location>
        <position position="112"/>
    </location>
    <ligand>
        <name>[4Fe-4S] cluster</name>
        <dbReference type="ChEBI" id="CHEBI:49883"/>
        <label>1</label>
    </ligand>
</feature>
<organism>
    <name type="scientific">Francisella tularensis subsp. tularensis (strain SCHU S4 / Schu 4)</name>
    <dbReference type="NCBI Taxonomy" id="177416"/>
    <lineage>
        <taxon>Bacteria</taxon>
        <taxon>Pseudomonadati</taxon>
        <taxon>Pseudomonadota</taxon>
        <taxon>Gammaproteobacteria</taxon>
        <taxon>Thiotrichales</taxon>
        <taxon>Francisellaceae</taxon>
        <taxon>Francisella</taxon>
    </lineage>
</organism>
<sequence length="162" mass="18862">MRNITNFLKTFLLWELLKGLKVTGKHFFTRKVTVQYPDEKTPISNRFRGLHALRRYENGEERCIACKLCEVVCPALAITINSTEREDGTRRTSSYEMDLFKCIFCGYCEESCPVDSIVETNILEYHFEERGENIMTKAKLLAIGDKYEAQIAADRLQDKDFR</sequence>
<proteinExistence type="inferred from homology"/>
<name>NUOI_FRATT</name>
<evidence type="ECO:0000255" key="1">
    <source>
        <dbReference type="HAMAP-Rule" id="MF_01351"/>
    </source>
</evidence>
<gene>
    <name evidence="1" type="primary">nuoI</name>
    <name type="ordered locus">FTT_0039</name>
</gene>